<organism>
    <name type="scientific">Methylorubrum extorquens (strain ATCC 14718 / DSM 1338 / JCM 2805 / NCIMB 9133 / AM1)</name>
    <name type="common">Methylobacterium extorquens</name>
    <dbReference type="NCBI Taxonomy" id="272630"/>
    <lineage>
        <taxon>Bacteria</taxon>
        <taxon>Pseudomonadati</taxon>
        <taxon>Pseudomonadota</taxon>
        <taxon>Alphaproteobacteria</taxon>
        <taxon>Hyphomicrobiales</taxon>
        <taxon>Methylobacteriaceae</taxon>
        <taxon>Methylorubrum</taxon>
    </lineage>
</organism>
<comment type="function">
    <text evidence="1">Involved in pyrimidine catabolism. May facilitate the hydrolysis of carbamate, a reaction that can also occur spontaneously.</text>
</comment>
<comment type="catalytic activity">
    <reaction evidence="1">
        <text>carbamate + 2 H(+) = NH4(+) + CO2</text>
        <dbReference type="Rhea" id="RHEA:15649"/>
        <dbReference type="ChEBI" id="CHEBI:13941"/>
        <dbReference type="ChEBI" id="CHEBI:15378"/>
        <dbReference type="ChEBI" id="CHEBI:16526"/>
        <dbReference type="ChEBI" id="CHEBI:28938"/>
    </reaction>
</comment>
<comment type="similarity">
    <text evidence="1">Belongs to the AB hydrolase superfamily. Hydrolase RutD family.</text>
</comment>
<feature type="chain" id="PRO_0000402971" description="Putative carbamate hydrolase RutD">
    <location>
        <begin position="1"/>
        <end position="260"/>
    </location>
</feature>
<feature type="domain" description="AB hydrolase-1" evidence="1">
    <location>
        <begin position="18"/>
        <end position="239"/>
    </location>
</feature>
<name>RUTD_METEA</name>
<gene>
    <name evidence="1" type="primary">rutD</name>
    <name type="ordered locus">MexAM1_META1p1661</name>
</gene>
<protein>
    <recommendedName>
        <fullName evidence="1">Putative carbamate hydrolase RutD</fullName>
        <ecNumber evidence="1">3.5.1.-</ecNumber>
    </recommendedName>
    <alternativeName>
        <fullName evidence="1">Aminohydrolase</fullName>
    </alternativeName>
</protein>
<keyword id="KW-0378">Hydrolase</keyword>
<keyword id="KW-1185">Reference proteome</keyword>
<sequence>MAAPVHHEVHGPEGGRKVLLSPGLGGSAHYFAPQVPVLAERFRVVTYDHRGTGRSPGPLEPGHDIAAMARDVLDLLDHLDIGTADIVGHALGGLIALQLALTHPERVGRIVVINGWAAMDPATRRCFAARKALLRHAGPEAFVRAQAIFLYPAPWLSENAARLADDEAQALAHFAGTRTVLTRIAALETFDATAALGRIPHETLLMAARDDVLVPFTASDILAAGLPNARLDLAPEGGHAHSATRPEAFNRTLLDFLTSP</sequence>
<reference key="1">
    <citation type="journal article" date="2009" name="PLoS ONE">
        <title>Methylobacterium genome sequences: a reference blueprint to investigate microbial metabolism of C1 compounds from natural and industrial sources.</title>
        <authorList>
            <person name="Vuilleumier S."/>
            <person name="Chistoserdova L."/>
            <person name="Lee M.-C."/>
            <person name="Bringel F."/>
            <person name="Lajus A."/>
            <person name="Zhou Y."/>
            <person name="Gourion B."/>
            <person name="Barbe V."/>
            <person name="Chang J."/>
            <person name="Cruveiller S."/>
            <person name="Dossat C."/>
            <person name="Gillett W."/>
            <person name="Gruffaz C."/>
            <person name="Haugen E."/>
            <person name="Hourcade E."/>
            <person name="Levy R."/>
            <person name="Mangenot S."/>
            <person name="Muller E."/>
            <person name="Nadalig T."/>
            <person name="Pagni M."/>
            <person name="Penny C."/>
            <person name="Peyraud R."/>
            <person name="Robinson D.G."/>
            <person name="Roche D."/>
            <person name="Rouy Z."/>
            <person name="Saenampechek C."/>
            <person name="Salvignol G."/>
            <person name="Vallenet D."/>
            <person name="Wu Z."/>
            <person name="Marx C.J."/>
            <person name="Vorholt J.A."/>
            <person name="Olson M.V."/>
            <person name="Kaul R."/>
            <person name="Weissenbach J."/>
            <person name="Medigue C."/>
            <person name="Lidstrom M.E."/>
        </authorList>
    </citation>
    <scope>NUCLEOTIDE SEQUENCE [LARGE SCALE GENOMIC DNA]</scope>
    <source>
        <strain>ATCC 14718 / DSM 1338 / JCM 2805 / NCIMB 9133 / AM1</strain>
    </source>
</reference>
<evidence type="ECO:0000255" key="1">
    <source>
        <dbReference type="HAMAP-Rule" id="MF_00832"/>
    </source>
</evidence>
<proteinExistence type="inferred from homology"/>
<dbReference type="EC" id="3.5.1.-" evidence="1"/>
<dbReference type="EMBL" id="CP001510">
    <property type="protein sequence ID" value="ACS39510.1"/>
    <property type="molecule type" value="Genomic_DNA"/>
</dbReference>
<dbReference type="RefSeq" id="WP_003606168.1">
    <property type="nucleotide sequence ID" value="NC_012808.1"/>
</dbReference>
<dbReference type="SMR" id="C5B0U6"/>
<dbReference type="STRING" id="272630.MexAM1_META1p1661"/>
<dbReference type="ESTHER" id="metea-rutd">
    <property type="family name" value="RutD"/>
</dbReference>
<dbReference type="KEGG" id="mea:Mex_1p1661"/>
<dbReference type="eggNOG" id="COG2267">
    <property type="taxonomic scope" value="Bacteria"/>
</dbReference>
<dbReference type="HOGENOM" id="CLU_020336_50_1_5"/>
<dbReference type="OrthoDB" id="7958481at2"/>
<dbReference type="Proteomes" id="UP000009081">
    <property type="component" value="Chromosome"/>
</dbReference>
<dbReference type="GO" id="GO:0016020">
    <property type="term" value="C:membrane"/>
    <property type="evidence" value="ECO:0007669"/>
    <property type="project" value="TreeGrafter"/>
</dbReference>
<dbReference type="GO" id="GO:0016811">
    <property type="term" value="F:hydrolase activity, acting on carbon-nitrogen (but not peptide) bonds, in linear amides"/>
    <property type="evidence" value="ECO:0007669"/>
    <property type="project" value="InterPro"/>
</dbReference>
<dbReference type="GO" id="GO:0019740">
    <property type="term" value="P:nitrogen utilization"/>
    <property type="evidence" value="ECO:0007669"/>
    <property type="project" value="UniProtKB-UniRule"/>
</dbReference>
<dbReference type="GO" id="GO:0006212">
    <property type="term" value="P:uracil catabolic process"/>
    <property type="evidence" value="ECO:0007669"/>
    <property type="project" value="UniProtKB-UniRule"/>
</dbReference>
<dbReference type="Gene3D" id="3.40.50.1820">
    <property type="entry name" value="alpha/beta hydrolase"/>
    <property type="match status" value="1"/>
</dbReference>
<dbReference type="HAMAP" id="MF_00832">
    <property type="entry name" value="RutD"/>
    <property type="match status" value="1"/>
</dbReference>
<dbReference type="InterPro" id="IPR000073">
    <property type="entry name" value="AB_hydrolase_1"/>
</dbReference>
<dbReference type="InterPro" id="IPR029058">
    <property type="entry name" value="AB_hydrolase_fold"/>
</dbReference>
<dbReference type="InterPro" id="IPR050266">
    <property type="entry name" value="AB_hydrolase_sf"/>
</dbReference>
<dbReference type="InterPro" id="IPR019913">
    <property type="entry name" value="Pyrimidine_utilisation_RutD"/>
</dbReference>
<dbReference type="NCBIfam" id="TIGR03611">
    <property type="entry name" value="RutD"/>
    <property type="match status" value="1"/>
</dbReference>
<dbReference type="PANTHER" id="PTHR43798:SF33">
    <property type="entry name" value="HYDROLASE, PUTATIVE (AFU_ORTHOLOGUE AFUA_2G14860)-RELATED"/>
    <property type="match status" value="1"/>
</dbReference>
<dbReference type="PANTHER" id="PTHR43798">
    <property type="entry name" value="MONOACYLGLYCEROL LIPASE"/>
    <property type="match status" value="1"/>
</dbReference>
<dbReference type="Pfam" id="PF00561">
    <property type="entry name" value="Abhydrolase_1"/>
    <property type="match status" value="1"/>
</dbReference>
<dbReference type="PRINTS" id="PR00111">
    <property type="entry name" value="ABHYDROLASE"/>
</dbReference>
<dbReference type="SUPFAM" id="SSF53474">
    <property type="entry name" value="alpha/beta-Hydrolases"/>
    <property type="match status" value="1"/>
</dbReference>
<accession>C5B0U6</accession>